<protein>
    <recommendedName>
        <fullName>Unknown protein 1</fullName>
    </recommendedName>
</protein>
<organism>
    <name type="scientific">Coniferiporia sulphurascens</name>
    <name type="common">Laminated root rot fungus</name>
    <name type="synonym">Phellinidium sulphurascens</name>
    <dbReference type="NCBI Taxonomy" id="175648"/>
    <lineage>
        <taxon>Eukaryota</taxon>
        <taxon>Fungi</taxon>
        <taxon>Dikarya</taxon>
        <taxon>Basidiomycota</taxon>
        <taxon>Agaricomycotina</taxon>
        <taxon>Agaricomycetes</taxon>
        <taxon>Hymenochaetales</taxon>
        <taxon>Hymenochaetaceae</taxon>
        <taxon>Coniferiporia</taxon>
    </lineage>
</organism>
<evidence type="ECO:0000303" key="1">
    <source>
    </source>
</evidence>
<sequence length="23" mass="2657">VAIIIYSMYGHIAKYGNFPGQWK</sequence>
<proteinExistence type="evidence at protein level"/>
<reference key="1">
    <citation type="journal article" date="2008" name="J. Proteomics">
        <title>A proteomics approach to identify proteins differentially expressed in Douglas-fir seedlings infected by Phellinus sulphurascens.</title>
        <authorList>
            <person name="Islam M.A."/>
            <person name="Sturrock R.N."/>
            <person name="Ekramoddoullah A.K.M."/>
        </authorList>
    </citation>
    <scope>IDENTIFICATION BY MASS SPECTROMETRY</scope>
</reference>
<name>UP01_CONSH</name>
<feature type="chain" id="PRO_0000347287" description="Unknown protein 1">
    <location>
        <begin position="1" status="less than"/>
        <end position="23" status="greater than"/>
    </location>
</feature>
<feature type="non-consecutive residues" evidence="1">
    <location>
        <begin position="14"/>
        <end position="15"/>
    </location>
</feature>
<feature type="non-terminal residue" evidence="1">
    <location>
        <position position="1"/>
    </location>
</feature>
<feature type="non-terminal residue" evidence="1">
    <location>
        <position position="23"/>
    </location>
</feature>
<accession>P85898</accession>